<comment type="function">
    <text evidence="1">Catalyzes the NADPH-dependent rearrangement and reduction of 1-deoxy-D-xylulose-5-phosphate (DXP) to 2-C-methyl-D-erythritol 4-phosphate (MEP).</text>
</comment>
<comment type="catalytic activity">
    <reaction evidence="1">
        <text>2-C-methyl-D-erythritol 4-phosphate + NADP(+) = 1-deoxy-D-xylulose 5-phosphate + NADPH + H(+)</text>
        <dbReference type="Rhea" id="RHEA:13717"/>
        <dbReference type="ChEBI" id="CHEBI:15378"/>
        <dbReference type="ChEBI" id="CHEBI:57783"/>
        <dbReference type="ChEBI" id="CHEBI:57792"/>
        <dbReference type="ChEBI" id="CHEBI:58262"/>
        <dbReference type="ChEBI" id="CHEBI:58349"/>
        <dbReference type="EC" id="1.1.1.267"/>
    </reaction>
    <physiologicalReaction direction="right-to-left" evidence="1">
        <dbReference type="Rhea" id="RHEA:13719"/>
    </physiologicalReaction>
</comment>
<comment type="cofactor">
    <cofactor evidence="1">
        <name>Mg(2+)</name>
        <dbReference type="ChEBI" id="CHEBI:18420"/>
    </cofactor>
    <cofactor evidence="1">
        <name>Mn(2+)</name>
        <dbReference type="ChEBI" id="CHEBI:29035"/>
    </cofactor>
</comment>
<comment type="pathway">
    <text evidence="1">Isoprenoid biosynthesis; isopentenyl diphosphate biosynthesis via DXP pathway; isopentenyl diphosphate from 1-deoxy-D-xylulose 5-phosphate: step 1/6.</text>
</comment>
<comment type="similarity">
    <text evidence="1">Belongs to the DXR family.</text>
</comment>
<name>DXR_MACCJ</name>
<protein>
    <recommendedName>
        <fullName evidence="1">1-deoxy-D-xylulose 5-phosphate reductoisomerase</fullName>
        <shortName evidence="1">DXP reductoisomerase</shortName>
        <ecNumber evidence="1">1.1.1.267</ecNumber>
    </recommendedName>
    <alternativeName>
        <fullName evidence="1">1-deoxyxylulose-5-phosphate reductoisomerase</fullName>
    </alternativeName>
    <alternativeName>
        <fullName evidence="1">2-C-methyl-D-erythritol 4-phosphate synthase</fullName>
    </alternativeName>
</protein>
<keyword id="KW-0414">Isoprene biosynthesis</keyword>
<keyword id="KW-0464">Manganese</keyword>
<keyword id="KW-0479">Metal-binding</keyword>
<keyword id="KW-0521">NADP</keyword>
<keyword id="KW-0560">Oxidoreductase</keyword>
<keyword id="KW-1185">Reference proteome</keyword>
<organism>
    <name type="scientific">Macrococcus caseolyticus (strain JCSC5402)</name>
    <name type="common">Macrococcoides caseolyticum</name>
    <dbReference type="NCBI Taxonomy" id="458233"/>
    <lineage>
        <taxon>Bacteria</taxon>
        <taxon>Bacillati</taxon>
        <taxon>Bacillota</taxon>
        <taxon>Bacilli</taxon>
        <taxon>Bacillales</taxon>
        <taxon>Staphylococcaceae</taxon>
        <taxon>Macrococcoides</taxon>
    </lineage>
</organism>
<accession>B9EBE2</accession>
<evidence type="ECO:0000255" key="1">
    <source>
        <dbReference type="HAMAP-Rule" id="MF_00183"/>
    </source>
</evidence>
<feature type="chain" id="PRO_1000124098" description="1-deoxy-D-xylulose 5-phosphate reductoisomerase">
    <location>
        <begin position="1"/>
        <end position="376"/>
    </location>
</feature>
<feature type="binding site" evidence="1">
    <location>
        <position position="10"/>
    </location>
    <ligand>
        <name>NADPH</name>
        <dbReference type="ChEBI" id="CHEBI:57783"/>
    </ligand>
</feature>
<feature type="binding site" evidence="1">
    <location>
        <position position="11"/>
    </location>
    <ligand>
        <name>NADPH</name>
        <dbReference type="ChEBI" id="CHEBI:57783"/>
    </ligand>
</feature>
<feature type="binding site" evidence="1">
    <location>
        <position position="12"/>
    </location>
    <ligand>
        <name>NADPH</name>
        <dbReference type="ChEBI" id="CHEBI:57783"/>
    </ligand>
</feature>
<feature type="binding site" evidence="1">
    <location>
        <position position="13"/>
    </location>
    <ligand>
        <name>NADPH</name>
        <dbReference type="ChEBI" id="CHEBI:57783"/>
    </ligand>
</feature>
<feature type="binding site" evidence="1">
    <location>
        <position position="36"/>
    </location>
    <ligand>
        <name>NADPH</name>
        <dbReference type="ChEBI" id="CHEBI:57783"/>
    </ligand>
</feature>
<feature type="binding site" evidence="1">
    <location>
        <position position="37"/>
    </location>
    <ligand>
        <name>NADPH</name>
        <dbReference type="ChEBI" id="CHEBI:57783"/>
    </ligand>
</feature>
<feature type="binding site" evidence="1">
    <location>
        <position position="38"/>
    </location>
    <ligand>
        <name>NADPH</name>
        <dbReference type="ChEBI" id="CHEBI:57783"/>
    </ligand>
</feature>
<feature type="binding site" evidence="1">
    <location>
        <position position="118"/>
    </location>
    <ligand>
        <name>NADPH</name>
        <dbReference type="ChEBI" id="CHEBI:57783"/>
    </ligand>
</feature>
<feature type="binding site" evidence="1">
    <location>
        <position position="119"/>
    </location>
    <ligand>
        <name>1-deoxy-D-xylulose 5-phosphate</name>
        <dbReference type="ChEBI" id="CHEBI:57792"/>
    </ligand>
</feature>
<feature type="binding site" evidence="1">
    <location>
        <position position="120"/>
    </location>
    <ligand>
        <name>NADPH</name>
        <dbReference type="ChEBI" id="CHEBI:57783"/>
    </ligand>
</feature>
<feature type="binding site" evidence="1">
    <location>
        <position position="144"/>
    </location>
    <ligand>
        <name>Mn(2+)</name>
        <dbReference type="ChEBI" id="CHEBI:29035"/>
    </ligand>
</feature>
<feature type="binding site" evidence="1">
    <location>
        <position position="145"/>
    </location>
    <ligand>
        <name>1-deoxy-D-xylulose 5-phosphate</name>
        <dbReference type="ChEBI" id="CHEBI:57792"/>
    </ligand>
</feature>
<feature type="binding site" evidence="1">
    <location>
        <position position="146"/>
    </location>
    <ligand>
        <name>1-deoxy-D-xylulose 5-phosphate</name>
        <dbReference type="ChEBI" id="CHEBI:57792"/>
    </ligand>
</feature>
<feature type="binding site" evidence="1">
    <location>
        <position position="146"/>
    </location>
    <ligand>
        <name>Mn(2+)</name>
        <dbReference type="ChEBI" id="CHEBI:29035"/>
    </ligand>
</feature>
<feature type="binding site" evidence="1">
    <location>
        <position position="170"/>
    </location>
    <ligand>
        <name>1-deoxy-D-xylulose 5-phosphate</name>
        <dbReference type="ChEBI" id="CHEBI:57792"/>
    </ligand>
</feature>
<feature type="binding site" evidence="1">
    <location>
        <position position="193"/>
    </location>
    <ligand>
        <name>1-deoxy-D-xylulose 5-phosphate</name>
        <dbReference type="ChEBI" id="CHEBI:57792"/>
    </ligand>
</feature>
<feature type="binding site" evidence="1">
    <location>
        <position position="199"/>
    </location>
    <ligand>
        <name>NADPH</name>
        <dbReference type="ChEBI" id="CHEBI:57783"/>
    </ligand>
</feature>
<feature type="binding site" evidence="1">
    <location>
        <position position="206"/>
    </location>
    <ligand>
        <name>1-deoxy-D-xylulose 5-phosphate</name>
        <dbReference type="ChEBI" id="CHEBI:57792"/>
    </ligand>
</feature>
<feature type="binding site" evidence="1">
    <location>
        <position position="211"/>
    </location>
    <ligand>
        <name>1-deoxy-D-xylulose 5-phosphate</name>
        <dbReference type="ChEBI" id="CHEBI:57792"/>
    </ligand>
</feature>
<feature type="binding site" evidence="1">
    <location>
        <position position="212"/>
    </location>
    <ligand>
        <name>1-deoxy-D-xylulose 5-phosphate</name>
        <dbReference type="ChEBI" id="CHEBI:57792"/>
    </ligand>
</feature>
<feature type="binding site" evidence="1">
    <location>
        <position position="215"/>
    </location>
    <ligand>
        <name>1-deoxy-D-xylulose 5-phosphate</name>
        <dbReference type="ChEBI" id="CHEBI:57792"/>
    </ligand>
</feature>
<feature type="binding site" evidence="1">
    <location>
        <position position="215"/>
    </location>
    <ligand>
        <name>Mn(2+)</name>
        <dbReference type="ChEBI" id="CHEBI:29035"/>
    </ligand>
</feature>
<proteinExistence type="inferred from homology"/>
<sequence>MKNIGILGASGSVGTQGLDIIRQYPDTYKLVSFSVGKNLELANKIIEEFRPDICCVQDKEDIDKIQSSSIKVVYGNDGLMEIAAYVKNDMLLNSIMGSIGLKPTVHAIKHGIDIALANKETLVVAGEIIMQLAREYNVNIIPVDSEHSAIFQCLNGEDHKHIEKLIITASGGSFRELSREALKDVTVQDALKHPNWSMGKKITIDSATMMNKGLEVIEARWLFDMPIDKIETLLHKQSIIHSMVEFNDTSVIAQLGTPDMRMPILYAFSYPDRLARKAERLNLAEVGQLDFKAMDFDRYRCLKLAYDAISIGGTMPVVMNAVNEVVVQQFLDGEIGFLDIETIIEREMNAHDVIQSPDLETILEIDAQYKSRKYEV</sequence>
<dbReference type="EC" id="1.1.1.267" evidence="1"/>
<dbReference type="EMBL" id="AP009484">
    <property type="protein sequence ID" value="BAH17553.1"/>
    <property type="molecule type" value="Genomic_DNA"/>
</dbReference>
<dbReference type="RefSeq" id="WP_012656753.1">
    <property type="nucleotide sequence ID" value="NC_011999.1"/>
</dbReference>
<dbReference type="SMR" id="B9EBE2"/>
<dbReference type="STRING" id="458233.MCCL_0846"/>
<dbReference type="KEGG" id="mcl:MCCL_0846"/>
<dbReference type="eggNOG" id="COG0743">
    <property type="taxonomic scope" value="Bacteria"/>
</dbReference>
<dbReference type="HOGENOM" id="CLU_035714_0_0_9"/>
<dbReference type="OrthoDB" id="9806546at2"/>
<dbReference type="UniPathway" id="UPA00056">
    <property type="reaction ID" value="UER00092"/>
</dbReference>
<dbReference type="Proteomes" id="UP000001383">
    <property type="component" value="Chromosome"/>
</dbReference>
<dbReference type="GO" id="GO:0030604">
    <property type="term" value="F:1-deoxy-D-xylulose-5-phosphate reductoisomerase activity"/>
    <property type="evidence" value="ECO:0007669"/>
    <property type="project" value="UniProtKB-UniRule"/>
</dbReference>
<dbReference type="GO" id="GO:0030145">
    <property type="term" value="F:manganese ion binding"/>
    <property type="evidence" value="ECO:0007669"/>
    <property type="project" value="TreeGrafter"/>
</dbReference>
<dbReference type="GO" id="GO:0070402">
    <property type="term" value="F:NADPH binding"/>
    <property type="evidence" value="ECO:0007669"/>
    <property type="project" value="InterPro"/>
</dbReference>
<dbReference type="GO" id="GO:0051484">
    <property type="term" value="P:isopentenyl diphosphate biosynthetic process, methylerythritol 4-phosphate pathway involved in terpenoid biosynthetic process"/>
    <property type="evidence" value="ECO:0007669"/>
    <property type="project" value="TreeGrafter"/>
</dbReference>
<dbReference type="FunFam" id="3.40.50.720:FF:000045">
    <property type="entry name" value="1-deoxy-D-xylulose 5-phosphate reductoisomerase"/>
    <property type="match status" value="1"/>
</dbReference>
<dbReference type="Gene3D" id="1.10.1740.10">
    <property type="match status" value="1"/>
</dbReference>
<dbReference type="Gene3D" id="3.40.50.720">
    <property type="entry name" value="NAD(P)-binding Rossmann-like Domain"/>
    <property type="match status" value="1"/>
</dbReference>
<dbReference type="HAMAP" id="MF_00183">
    <property type="entry name" value="DXP_reductoisom"/>
    <property type="match status" value="1"/>
</dbReference>
<dbReference type="InterPro" id="IPR003821">
    <property type="entry name" value="DXP_reductoisomerase"/>
</dbReference>
<dbReference type="InterPro" id="IPR013644">
    <property type="entry name" value="DXP_reductoisomerase_C"/>
</dbReference>
<dbReference type="InterPro" id="IPR013512">
    <property type="entry name" value="DXP_reductoisomerase_N"/>
</dbReference>
<dbReference type="InterPro" id="IPR026877">
    <property type="entry name" value="DXPR_C"/>
</dbReference>
<dbReference type="InterPro" id="IPR036169">
    <property type="entry name" value="DXPR_C_sf"/>
</dbReference>
<dbReference type="InterPro" id="IPR036291">
    <property type="entry name" value="NAD(P)-bd_dom_sf"/>
</dbReference>
<dbReference type="NCBIfam" id="TIGR00243">
    <property type="entry name" value="Dxr"/>
    <property type="match status" value="1"/>
</dbReference>
<dbReference type="NCBIfam" id="NF009114">
    <property type="entry name" value="PRK12464.1"/>
    <property type="match status" value="1"/>
</dbReference>
<dbReference type="PANTHER" id="PTHR30525">
    <property type="entry name" value="1-DEOXY-D-XYLULOSE 5-PHOSPHATE REDUCTOISOMERASE"/>
    <property type="match status" value="1"/>
</dbReference>
<dbReference type="PANTHER" id="PTHR30525:SF0">
    <property type="entry name" value="1-DEOXY-D-XYLULOSE 5-PHOSPHATE REDUCTOISOMERASE, CHLOROPLASTIC"/>
    <property type="match status" value="1"/>
</dbReference>
<dbReference type="Pfam" id="PF08436">
    <property type="entry name" value="DXP_redisom_C"/>
    <property type="match status" value="1"/>
</dbReference>
<dbReference type="Pfam" id="PF02670">
    <property type="entry name" value="DXP_reductoisom"/>
    <property type="match status" value="1"/>
</dbReference>
<dbReference type="Pfam" id="PF13288">
    <property type="entry name" value="DXPR_C"/>
    <property type="match status" value="1"/>
</dbReference>
<dbReference type="PIRSF" id="PIRSF006205">
    <property type="entry name" value="Dxp_reductismrs"/>
    <property type="match status" value="1"/>
</dbReference>
<dbReference type="SUPFAM" id="SSF69055">
    <property type="entry name" value="1-deoxy-D-xylulose-5-phosphate reductoisomerase, C-terminal domain"/>
    <property type="match status" value="1"/>
</dbReference>
<dbReference type="SUPFAM" id="SSF55347">
    <property type="entry name" value="Glyceraldehyde-3-phosphate dehydrogenase-like, C-terminal domain"/>
    <property type="match status" value="1"/>
</dbReference>
<dbReference type="SUPFAM" id="SSF51735">
    <property type="entry name" value="NAD(P)-binding Rossmann-fold domains"/>
    <property type="match status" value="1"/>
</dbReference>
<gene>
    <name evidence="1" type="primary">dxr</name>
    <name type="ordered locus">MCCL_0846</name>
</gene>
<reference key="1">
    <citation type="journal article" date="2009" name="J. Bacteriol.">
        <title>Complete genome sequence of Macrococcus caseolyticus strain JCSCS5402, reflecting the ancestral genome of the human-pathogenic staphylococci.</title>
        <authorList>
            <person name="Baba T."/>
            <person name="Kuwahara-Arai K."/>
            <person name="Uchiyama I."/>
            <person name="Takeuchi F."/>
            <person name="Ito T."/>
            <person name="Hiramatsu K."/>
        </authorList>
    </citation>
    <scope>NUCLEOTIDE SEQUENCE [LARGE SCALE GENOMIC DNA]</scope>
    <source>
        <strain>JCSC5402</strain>
    </source>
</reference>